<organism>
    <name type="scientific">Xenopus tropicalis</name>
    <name type="common">Western clawed frog</name>
    <name type="synonym">Silurana tropicalis</name>
    <dbReference type="NCBI Taxonomy" id="8364"/>
    <lineage>
        <taxon>Eukaryota</taxon>
        <taxon>Metazoa</taxon>
        <taxon>Chordata</taxon>
        <taxon>Craniata</taxon>
        <taxon>Vertebrata</taxon>
        <taxon>Euteleostomi</taxon>
        <taxon>Amphibia</taxon>
        <taxon>Batrachia</taxon>
        <taxon>Anura</taxon>
        <taxon>Pipoidea</taxon>
        <taxon>Pipidae</taxon>
        <taxon>Xenopodinae</taxon>
        <taxon>Xenopus</taxon>
        <taxon>Silurana</taxon>
    </lineage>
</organism>
<protein>
    <recommendedName>
        <fullName>EF-hand calcium-binding domain-containing protein 4A</fullName>
    </recommendedName>
    <alternativeName>
        <fullName>Calcium release-activated channel regulator 2B</fullName>
    </alternativeName>
</protein>
<evidence type="ECO:0000255" key="1"/>
<evidence type="ECO:0000255" key="2">
    <source>
        <dbReference type="PROSITE-ProRule" id="PRU00448"/>
    </source>
</evidence>
<evidence type="ECO:0000256" key="3">
    <source>
        <dbReference type="SAM" id="MobiDB-lite"/>
    </source>
</evidence>
<evidence type="ECO:0000305" key="4"/>
<name>EFC4A_XENTR</name>
<gene>
    <name type="primary">cracr2b</name>
    <name type="synonym">efcab4a</name>
</gene>
<comment type="similarity">
    <text evidence="4">Belongs to the EFCAB4 family.</text>
</comment>
<reference key="1">
    <citation type="submission" date="2006-11" db="EMBL/GenBank/DDBJ databases">
        <authorList>
            <consortium name="NIH - Xenopus Gene Collection (XGC) project"/>
        </authorList>
    </citation>
    <scope>NUCLEOTIDE SEQUENCE [LARGE SCALE MRNA]</scope>
    <source>
        <tissue>Testis</tissue>
    </source>
</reference>
<keyword id="KW-0106">Calcium</keyword>
<keyword id="KW-0175">Coiled coil</keyword>
<keyword id="KW-0479">Metal-binding</keyword>
<keyword id="KW-1185">Reference proteome</keyword>
<keyword id="KW-0677">Repeat</keyword>
<feature type="chain" id="PRO_0000395808" description="EF-hand calcium-binding domain-containing protein 4A">
    <location>
        <begin position="1"/>
        <end position="256"/>
    </location>
</feature>
<feature type="domain" description="EF-hand 1" evidence="4">
    <location>
        <begin position="41"/>
        <end position="69"/>
    </location>
</feature>
<feature type="domain" description="EF-hand 2" evidence="2">
    <location>
        <begin position="71"/>
        <end position="106"/>
    </location>
</feature>
<feature type="region of interest" description="Disordered" evidence="3">
    <location>
        <begin position="1"/>
        <end position="32"/>
    </location>
</feature>
<feature type="coiled-coil region" evidence="1">
    <location>
        <begin position="190"/>
        <end position="235"/>
    </location>
</feature>
<feature type="compositionally biased region" description="Basic residues" evidence="3">
    <location>
        <begin position="1"/>
        <end position="10"/>
    </location>
</feature>
<feature type="binding site" evidence="2">
    <location>
        <position position="84"/>
    </location>
    <ligand>
        <name>Ca(2+)</name>
        <dbReference type="ChEBI" id="CHEBI:29108"/>
    </ligand>
</feature>
<feature type="binding site" evidence="2">
    <location>
        <position position="86"/>
    </location>
    <ligand>
        <name>Ca(2+)</name>
        <dbReference type="ChEBI" id="CHEBI:29108"/>
    </ligand>
</feature>
<feature type="binding site" evidence="2">
    <location>
        <position position="88"/>
    </location>
    <ligand>
        <name>Ca(2+)</name>
        <dbReference type="ChEBI" id="CHEBI:29108"/>
    </ligand>
</feature>
<feature type="binding site" evidence="2">
    <location>
        <position position="90"/>
    </location>
    <ligand>
        <name>Ca(2+)</name>
        <dbReference type="ChEBI" id="CHEBI:29108"/>
    </ligand>
</feature>
<feature type="binding site" evidence="2">
    <location>
        <position position="95"/>
    </location>
    <ligand>
        <name>Ca(2+)</name>
        <dbReference type="ChEBI" id="CHEBI:29108"/>
    </ligand>
</feature>
<accession>A0JP75</accession>
<sequence length="256" mass="29990">MAHLGSRRRMSPGLRTRIAHRKAHRTPPSPLIAEPDEMMGKAHELFQLCDKEDKGLITKRDLQRLQNELPLTPEQLEAVFDSLDQSNNGYLTPVEFSMGLGKLLGVNLSHEEEKENSMMEETFESGWSDGPDEEDDAEEMLFSATMEHLGASRIFQEHKEIRDLWSRLRKERPELLSHFEEFLYRVSSYIRDVHHEKDTLEQALKRKETDHGREVRCLYEEMEQQIKIERERLLKKVLIKGDHGLKNYSHLIMSKV</sequence>
<proteinExistence type="evidence at transcript level"/>
<dbReference type="EMBL" id="BC127278">
    <property type="protein sequence ID" value="AAI27279.1"/>
    <property type="molecule type" value="mRNA"/>
</dbReference>
<dbReference type="RefSeq" id="NP_001090650.1">
    <property type="nucleotide sequence ID" value="NM_001097181.1"/>
</dbReference>
<dbReference type="SMR" id="A0JP75"/>
<dbReference type="FunCoup" id="A0JP75">
    <property type="interactions" value="3"/>
</dbReference>
<dbReference type="PaxDb" id="8364-ENSXETP00000041262"/>
<dbReference type="DNASU" id="100036622"/>
<dbReference type="GeneID" id="100036622"/>
<dbReference type="KEGG" id="xtr:100036622"/>
<dbReference type="AGR" id="Xenbase:XB-GENE-5729710"/>
<dbReference type="CTD" id="283229"/>
<dbReference type="Xenbase" id="XB-GENE-5729710">
    <property type="gene designation" value="cracr2b"/>
</dbReference>
<dbReference type="eggNOG" id="ENOG502QRXK">
    <property type="taxonomic scope" value="Eukaryota"/>
</dbReference>
<dbReference type="InParanoid" id="A0JP75"/>
<dbReference type="OMA" id="CFLMEND"/>
<dbReference type="OrthoDB" id="9837699at2759"/>
<dbReference type="Proteomes" id="UP000008143">
    <property type="component" value="Chromosome 4"/>
</dbReference>
<dbReference type="GO" id="GO:0005509">
    <property type="term" value="F:calcium ion binding"/>
    <property type="evidence" value="ECO:0007669"/>
    <property type="project" value="InterPro"/>
</dbReference>
<dbReference type="Gene3D" id="1.10.238.10">
    <property type="entry name" value="EF-hand"/>
    <property type="match status" value="1"/>
</dbReference>
<dbReference type="InterPro" id="IPR051111">
    <property type="entry name" value="Ca-binding_regulatory"/>
</dbReference>
<dbReference type="InterPro" id="IPR011992">
    <property type="entry name" value="EF-hand-dom_pair"/>
</dbReference>
<dbReference type="InterPro" id="IPR018247">
    <property type="entry name" value="EF_Hand_1_Ca_BS"/>
</dbReference>
<dbReference type="InterPro" id="IPR002048">
    <property type="entry name" value="EF_hand_dom"/>
</dbReference>
<dbReference type="PANTHER" id="PTHR46311:SF3">
    <property type="entry name" value="CALCIUM-BINDING PROTEIN 8"/>
    <property type="match status" value="1"/>
</dbReference>
<dbReference type="PANTHER" id="PTHR46311">
    <property type="entry name" value="CALCIUM-BINDING PROTEIN 8-RELATED"/>
    <property type="match status" value="1"/>
</dbReference>
<dbReference type="Pfam" id="PF13499">
    <property type="entry name" value="EF-hand_7"/>
    <property type="match status" value="1"/>
</dbReference>
<dbReference type="SUPFAM" id="SSF47473">
    <property type="entry name" value="EF-hand"/>
    <property type="match status" value="1"/>
</dbReference>
<dbReference type="PROSITE" id="PS00018">
    <property type="entry name" value="EF_HAND_1"/>
    <property type="match status" value="1"/>
</dbReference>
<dbReference type="PROSITE" id="PS50222">
    <property type="entry name" value="EF_HAND_2"/>
    <property type="match status" value="1"/>
</dbReference>